<keyword id="KW-0963">Cytoplasm</keyword>
<keyword id="KW-0489">Methyltransferase</keyword>
<keyword id="KW-0698">rRNA processing</keyword>
<keyword id="KW-0949">S-adenosyl-L-methionine</keyword>
<keyword id="KW-0808">Transferase</keyword>
<sequence>MPLLDTPFAQLDLIRQPEQQNEPLQAFDAADEYLLNHLAEQNLPIETRVLVLNDSFGALAISLSGNVQVSTSGDSFLAFQGLEKNLLRNGQAFDALRGIPASEPLVGPFDRVLIRVPKTLALLEEQLIRLQGQLAPGAQVVAAAMVKHLPRAAGDLLERYIGPVQASLAVKKARLLIATPEAKAPAVSPYPTRYRLDEPAIELLNHANVFCREGLDIGTRAFLPHLPKNLGAAGVADLGCGNGVLAIASALQNPDAHYTLVDESFMAVQSAAENWRAALGEREAIVRAGDGLAGQEAQSLDVVLCNPPFHQQQVVGDFLAWRMFQQAREALVVGGALYIVGNRHLGYHSKLARLFRGVEQVAATPKFVILKARK</sequence>
<name>RLMG_PSEPF</name>
<dbReference type="EC" id="2.1.1.174" evidence="1"/>
<dbReference type="EMBL" id="CP000094">
    <property type="protein sequence ID" value="ABA76627.1"/>
    <property type="molecule type" value="Genomic_DNA"/>
</dbReference>
<dbReference type="RefSeq" id="WP_011336032.1">
    <property type="nucleotide sequence ID" value="NC_007492.2"/>
</dbReference>
<dbReference type="SMR" id="Q3K6H7"/>
<dbReference type="KEGG" id="pfo:Pfl01_4890"/>
<dbReference type="eggNOG" id="COG2813">
    <property type="taxonomic scope" value="Bacteria"/>
</dbReference>
<dbReference type="HOGENOM" id="CLU_040288_4_0_6"/>
<dbReference type="Proteomes" id="UP000002704">
    <property type="component" value="Chromosome"/>
</dbReference>
<dbReference type="GO" id="GO:0005737">
    <property type="term" value="C:cytoplasm"/>
    <property type="evidence" value="ECO:0007669"/>
    <property type="project" value="UniProtKB-SubCell"/>
</dbReference>
<dbReference type="GO" id="GO:0052916">
    <property type="term" value="F:23S rRNA (guanine(1835)-N(2))-methyltransferase activity"/>
    <property type="evidence" value="ECO:0007669"/>
    <property type="project" value="UniProtKB-EC"/>
</dbReference>
<dbReference type="GO" id="GO:0003676">
    <property type="term" value="F:nucleic acid binding"/>
    <property type="evidence" value="ECO:0007669"/>
    <property type="project" value="InterPro"/>
</dbReference>
<dbReference type="CDD" id="cd02440">
    <property type="entry name" value="AdoMet_MTases"/>
    <property type="match status" value="1"/>
</dbReference>
<dbReference type="Gene3D" id="3.40.50.150">
    <property type="entry name" value="Vaccinia Virus protein VP39"/>
    <property type="match status" value="2"/>
</dbReference>
<dbReference type="HAMAP" id="MF_01859">
    <property type="entry name" value="23SrRNA_methyltr_G"/>
    <property type="match status" value="1"/>
</dbReference>
<dbReference type="InterPro" id="IPR002052">
    <property type="entry name" value="DNA_methylase_N6_adenine_CS"/>
</dbReference>
<dbReference type="InterPro" id="IPR017237">
    <property type="entry name" value="rRNA_m2G-MeTrfase_RlmG"/>
</dbReference>
<dbReference type="InterPro" id="IPR046977">
    <property type="entry name" value="RsmC/RlmG"/>
</dbReference>
<dbReference type="InterPro" id="IPR029063">
    <property type="entry name" value="SAM-dependent_MTases_sf"/>
</dbReference>
<dbReference type="InterPro" id="IPR007848">
    <property type="entry name" value="Small_mtfrase_dom"/>
</dbReference>
<dbReference type="PANTHER" id="PTHR47816:SF5">
    <property type="entry name" value="RIBOSOMAL RNA LARGE SUBUNIT METHYLTRANSFERASE G"/>
    <property type="match status" value="1"/>
</dbReference>
<dbReference type="PANTHER" id="PTHR47816">
    <property type="entry name" value="RIBOSOMAL RNA SMALL SUBUNIT METHYLTRANSFERASE C"/>
    <property type="match status" value="1"/>
</dbReference>
<dbReference type="Pfam" id="PF05175">
    <property type="entry name" value="MTS"/>
    <property type="match status" value="1"/>
</dbReference>
<dbReference type="PIRSF" id="PIRSF037565">
    <property type="entry name" value="RRNA_m2G_Mtase_RsmD_prd"/>
    <property type="match status" value="1"/>
</dbReference>
<dbReference type="SUPFAM" id="SSF53335">
    <property type="entry name" value="S-adenosyl-L-methionine-dependent methyltransferases"/>
    <property type="match status" value="1"/>
</dbReference>
<evidence type="ECO:0000255" key="1">
    <source>
        <dbReference type="HAMAP-Rule" id="MF_01859"/>
    </source>
</evidence>
<comment type="function">
    <text evidence="1">Specifically methylates the guanine in position 1835 (m2G1835) of 23S rRNA.</text>
</comment>
<comment type="catalytic activity">
    <reaction evidence="1">
        <text>guanosine(1835) in 23S rRNA + S-adenosyl-L-methionine = N(2)-methylguanosine(1835) in 23S rRNA + S-adenosyl-L-homocysteine + H(+)</text>
        <dbReference type="Rhea" id="RHEA:42744"/>
        <dbReference type="Rhea" id="RHEA-COMP:10217"/>
        <dbReference type="Rhea" id="RHEA-COMP:10218"/>
        <dbReference type="ChEBI" id="CHEBI:15378"/>
        <dbReference type="ChEBI" id="CHEBI:57856"/>
        <dbReference type="ChEBI" id="CHEBI:59789"/>
        <dbReference type="ChEBI" id="CHEBI:74269"/>
        <dbReference type="ChEBI" id="CHEBI:74481"/>
        <dbReference type="EC" id="2.1.1.174"/>
    </reaction>
</comment>
<comment type="subcellular location">
    <subcellularLocation>
        <location evidence="1">Cytoplasm</location>
    </subcellularLocation>
</comment>
<comment type="similarity">
    <text evidence="1">Belongs to the methyltransferase superfamily. RlmG family.</text>
</comment>
<protein>
    <recommendedName>
        <fullName evidence="1">Ribosomal RNA large subunit methyltransferase G</fullName>
        <ecNumber evidence="1">2.1.1.174</ecNumber>
    </recommendedName>
    <alternativeName>
        <fullName evidence="1">23S rRNA m2G1835 methyltransferase</fullName>
    </alternativeName>
    <alternativeName>
        <fullName evidence="1">rRNA (guanine-N(2)-)-methyltransferase RlmG</fullName>
    </alternativeName>
</protein>
<feature type="chain" id="PRO_0000366477" description="Ribosomal RNA large subunit methyltransferase G">
    <location>
        <begin position="1"/>
        <end position="374"/>
    </location>
</feature>
<proteinExistence type="inferred from homology"/>
<organism>
    <name type="scientific">Pseudomonas fluorescens (strain Pf0-1)</name>
    <dbReference type="NCBI Taxonomy" id="205922"/>
    <lineage>
        <taxon>Bacteria</taxon>
        <taxon>Pseudomonadati</taxon>
        <taxon>Pseudomonadota</taxon>
        <taxon>Gammaproteobacteria</taxon>
        <taxon>Pseudomonadales</taxon>
        <taxon>Pseudomonadaceae</taxon>
        <taxon>Pseudomonas</taxon>
    </lineage>
</organism>
<reference key="1">
    <citation type="journal article" date="2009" name="Genome Biol.">
        <title>Genomic and genetic analyses of diversity and plant interactions of Pseudomonas fluorescens.</title>
        <authorList>
            <person name="Silby M.W."/>
            <person name="Cerdeno-Tarraga A.M."/>
            <person name="Vernikos G.S."/>
            <person name="Giddens S.R."/>
            <person name="Jackson R.W."/>
            <person name="Preston G.M."/>
            <person name="Zhang X.-X."/>
            <person name="Moon C.D."/>
            <person name="Gehrig S.M."/>
            <person name="Godfrey S.A.C."/>
            <person name="Knight C.G."/>
            <person name="Malone J.G."/>
            <person name="Robinson Z."/>
            <person name="Spiers A.J."/>
            <person name="Harris S."/>
            <person name="Challis G.L."/>
            <person name="Yaxley A.M."/>
            <person name="Harris D."/>
            <person name="Seeger K."/>
            <person name="Murphy L."/>
            <person name="Rutter S."/>
            <person name="Squares R."/>
            <person name="Quail M.A."/>
            <person name="Saunders E."/>
            <person name="Mavromatis K."/>
            <person name="Brettin T.S."/>
            <person name="Bentley S.D."/>
            <person name="Hothersall J."/>
            <person name="Stephens E."/>
            <person name="Thomas C.M."/>
            <person name="Parkhill J."/>
            <person name="Levy S.B."/>
            <person name="Rainey P.B."/>
            <person name="Thomson N.R."/>
        </authorList>
    </citation>
    <scope>NUCLEOTIDE SEQUENCE [LARGE SCALE GENOMIC DNA]</scope>
    <source>
        <strain>Pf0-1</strain>
    </source>
</reference>
<accession>Q3K6H7</accession>
<gene>
    <name evidence="1" type="primary">rlmG</name>
    <name type="ordered locus">Pfl01_4890</name>
</gene>